<accession>A9BFS6</accession>
<sequence length="430" mass="50510">MEIGLVHYRVGETDGVSLEMVKWKQALRNMHLKTYLIAGDMGTSPGFKIPYIAYTDKRSNILKQKSFVNLDEWDENYFKKEMNKYIEDIYNQLYEMMDLDVMIVNNIFSLAHNPAAAVAIYRFCKDNGIKMIGHHHDFYWERDFYKNPTNDYIKEILEEYFPPKDITHVVINSLAQEELKNKKGLDSIVIPNVFDFNQKRWEIDDYNIKIYDKLNISQKDLIFLQATRIVRRKAIELAIDTVAEVKKDLKKYIGKTTFNGKKITQDTNVFLVLPGLSEESDYVEVLKEYASQKDVELKLAFSISDDIRHEEEEIFSLWDFYAIADFITYPSILEGFGNQFLEAIFAKTPVLMFEYPVYKKDIAPLGFEVVSLGSKAEYERGMYRVNQNEIIKAKEEIFQILFDPQGLHRLSRRILNLGKNIFPMKLWRKS</sequence>
<evidence type="ECO:0000250" key="1">
    <source>
        <dbReference type="UniProtKB" id="Q9X0V7"/>
    </source>
</evidence>
<evidence type="ECO:0000303" key="2">
    <source>
    </source>
</evidence>
<evidence type="ECO:0000305" key="3"/>
<evidence type="ECO:0000312" key="4">
    <source>
        <dbReference type="EMBL" id="ABX31422.1"/>
    </source>
</evidence>
<gene>
    <name evidence="2" type="primary">mggS</name>
    <name evidence="4" type="ordered locus">Pmob_0697</name>
</gene>
<reference key="1">
    <citation type="submission" date="2007-11" db="EMBL/GenBank/DDBJ databases">
        <title>Complete sequence of Petroga mobilis SJ95.</title>
        <authorList>
            <consortium name="US DOE Joint Genome Institute"/>
            <person name="Copeland A."/>
            <person name="Lucas S."/>
            <person name="Lapidus A."/>
            <person name="Barry K."/>
            <person name="Glavina del Rio T."/>
            <person name="Dalin E."/>
            <person name="Tice H."/>
            <person name="Pitluck S."/>
            <person name="Meincke L."/>
            <person name="Brettin T."/>
            <person name="Bruce D."/>
            <person name="Detter J.C."/>
            <person name="Han C."/>
            <person name="Kuske C.R."/>
            <person name="Schmutz J."/>
            <person name="Larimer F."/>
            <person name="Land M."/>
            <person name="Hauser L."/>
            <person name="Kyrpides N."/>
            <person name="Mikhailova N."/>
            <person name="Noll K."/>
            <person name="Richardson P."/>
        </authorList>
    </citation>
    <scope>NUCLEOTIDE SEQUENCE [LARGE SCALE GENOMIC DNA]</scope>
    <source>
        <strain>DSM 10674 / SJ95</strain>
    </source>
</reference>
<reference key="2">
    <citation type="journal article" date="2010" name="J. Bacteriol.">
        <title>Two alternative pathways for the synthesis of the rare compatible solute mannosylglucosylglycerate in Petrotoga mobilis.</title>
        <authorList>
            <person name="Fernandes C."/>
            <person name="Mendes V."/>
            <person name="Costa J."/>
            <person name="Empadinhas N."/>
            <person name="Jorge C."/>
            <person name="Lamosa P."/>
            <person name="Santos H."/>
            <person name="da Costa M.S."/>
        </authorList>
    </citation>
    <scope>PROBABLE FUNCTION</scope>
    <scope>GENE NAME</scope>
    <source>
        <strain>DSM 10674 / SJ95</strain>
    </source>
</reference>
<keyword id="KW-0328">Glycosyltransferase</keyword>
<keyword id="KW-0808">Transferase</keyword>
<organism>
    <name type="scientific">Petrotoga mobilis (strain DSM 10674 / SJ95)</name>
    <dbReference type="NCBI Taxonomy" id="403833"/>
    <lineage>
        <taxon>Bacteria</taxon>
        <taxon>Thermotogati</taxon>
        <taxon>Thermotogota</taxon>
        <taxon>Thermotogae</taxon>
        <taxon>Petrotogales</taxon>
        <taxon>Petrotogaceae</taxon>
        <taxon>Petrotoga</taxon>
    </lineage>
</organism>
<name>MGGS_PETMO</name>
<proteinExistence type="inferred from homology"/>
<feature type="chain" id="PRO_0000431557" description="Mannosylglucosylglycerate synthase">
    <location>
        <begin position="1"/>
        <end position="430"/>
    </location>
</feature>
<protein>
    <recommendedName>
        <fullName evidence="2">Mannosylglucosylglycerate synthase</fullName>
        <ecNumber evidence="1">2.4.1.-</ecNumber>
    </recommendedName>
</protein>
<dbReference type="EC" id="2.4.1.-" evidence="1"/>
<dbReference type="EMBL" id="CP000879">
    <property type="protein sequence ID" value="ABX31422.1"/>
    <property type="molecule type" value="Genomic_DNA"/>
</dbReference>
<dbReference type="RefSeq" id="WP_012208525.1">
    <property type="nucleotide sequence ID" value="NC_010003.1"/>
</dbReference>
<dbReference type="STRING" id="403833.Pmob_0697"/>
<dbReference type="CAZy" id="GT4">
    <property type="family name" value="Glycosyltransferase Family 4"/>
</dbReference>
<dbReference type="KEGG" id="pmo:Pmob_0697"/>
<dbReference type="eggNOG" id="COG0438">
    <property type="taxonomic scope" value="Bacteria"/>
</dbReference>
<dbReference type="HOGENOM" id="CLU_645170_0_0_0"/>
<dbReference type="Proteomes" id="UP000000789">
    <property type="component" value="Chromosome"/>
</dbReference>
<dbReference type="GO" id="GO:0016757">
    <property type="term" value="F:glycosyltransferase activity"/>
    <property type="evidence" value="ECO:0007669"/>
    <property type="project" value="UniProtKB-KW"/>
</dbReference>
<dbReference type="GO" id="GO:0009103">
    <property type="term" value="P:lipopolysaccharide biosynthetic process"/>
    <property type="evidence" value="ECO:0007669"/>
    <property type="project" value="TreeGrafter"/>
</dbReference>
<dbReference type="CDD" id="cd03801">
    <property type="entry name" value="GT4_PimA-like"/>
    <property type="match status" value="1"/>
</dbReference>
<dbReference type="Gene3D" id="3.40.50.2000">
    <property type="entry name" value="Glycogen Phosphorylase B"/>
    <property type="match status" value="2"/>
</dbReference>
<dbReference type="InterPro" id="IPR001296">
    <property type="entry name" value="Glyco_trans_1"/>
</dbReference>
<dbReference type="PANTHER" id="PTHR46401">
    <property type="entry name" value="GLYCOSYLTRANSFERASE WBBK-RELATED"/>
    <property type="match status" value="1"/>
</dbReference>
<dbReference type="PANTHER" id="PTHR46401:SF2">
    <property type="entry name" value="GLYCOSYLTRANSFERASE WBBK-RELATED"/>
    <property type="match status" value="1"/>
</dbReference>
<dbReference type="Pfam" id="PF00534">
    <property type="entry name" value="Glycos_transf_1"/>
    <property type="match status" value="1"/>
</dbReference>
<dbReference type="SUPFAM" id="SSF53756">
    <property type="entry name" value="UDP-Glycosyltransferase/glycogen phosphorylase"/>
    <property type="match status" value="1"/>
</dbReference>
<comment type="function">
    <text evidence="2">Involved in the biosynthesis of the compatible solute mannosylglucosylglycerate through a nonphosphorylating pathway. Catalyzes the synthesis of mannosylglucosylglycerate (MGG) from glucosylglycerate (GG) and GDP-mannose.</text>
</comment>
<comment type="catalytic activity">
    <reaction evidence="1">
        <text>(2R)-2-O-(alpha-D-glucopyranosyl)-glycerate + GDP-alpha-D-mannose = (2R)-2-O-[alpha-D-mannopyranosyl-(1-&gt;2)-alpha-D-glucopyranosyl]-glycerate + GDP + H(+)</text>
        <dbReference type="Rhea" id="RHEA:47728"/>
        <dbReference type="ChEBI" id="CHEBI:15378"/>
        <dbReference type="ChEBI" id="CHEBI:57527"/>
        <dbReference type="ChEBI" id="CHEBI:58189"/>
        <dbReference type="ChEBI" id="CHEBI:62510"/>
        <dbReference type="ChEBI" id="CHEBI:87836"/>
    </reaction>
</comment>
<comment type="cofactor">
    <cofactor evidence="1">
        <name>a divalent metal cation</name>
        <dbReference type="ChEBI" id="CHEBI:60240"/>
    </cofactor>
</comment>
<comment type="similarity">
    <text evidence="3">Belongs to the glycosyltransferase group 1 family.</text>
</comment>